<proteinExistence type="inferred from homology"/>
<keyword id="KW-0687">Ribonucleoprotein</keyword>
<keyword id="KW-0689">Ribosomal protein</keyword>
<keyword id="KW-0694">RNA-binding</keyword>
<keyword id="KW-0699">rRNA-binding</keyword>
<gene>
    <name evidence="1" type="primary">rplN</name>
    <name type="ordered locus">Shal_4124</name>
</gene>
<organism>
    <name type="scientific">Shewanella halifaxensis (strain HAW-EB4)</name>
    <dbReference type="NCBI Taxonomy" id="458817"/>
    <lineage>
        <taxon>Bacteria</taxon>
        <taxon>Pseudomonadati</taxon>
        <taxon>Pseudomonadota</taxon>
        <taxon>Gammaproteobacteria</taxon>
        <taxon>Alteromonadales</taxon>
        <taxon>Shewanellaceae</taxon>
        <taxon>Shewanella</taxon>
    </lineage>
</organism>
<dbReference type="EMBL" id="CP000931">
    <property type="protein sequence ID" value="ABZ78664.1"/>
    <property type="molecule type" value="Genomic_DNA"/>
</dbReference>
<dbReference type="RefSeq" id="WP_012279174.1">
    <property type="nucleotide sequence ID" value="NC_010334.1"/>
</dbReference>
<dbReference type="SMR" id="B0TM02"/>
<dbReference type="STRING" id="458817.Shal_4124"/>
<dbReference type="KEGG" id="shl:Shal_4124"/>
<dbReference type="eggNOG" id="COG0093">
    <property type="taxonomic scope" value="Bacteria"/>
</dbReference>
<dbReference type="HOGENOM" id="CLU_095071_2_1_6"/>
<dbReference type="OrthoDB" id="9806379at2"/>
<dbReference type="Proteomes" id="UP000001317">
    <property type="component" value="Chromosome"/>
</dbReference>
<dbReference type="GO" id="GO:0022625">
    <property type="term" value="C:cytosolic large ribosomal subunit"/>
    <property type="evidence" value="ECO:0007669"/>
    <property type="project" value="TreeGrafter"/>
</dbReference>
<dbReference type="GO" id="GO:0070180">
    <property type="term" value="F:large ribosomal subunit rRNA binding"/>
    <property type="evidence" value="ECO:0007669"/>
    <property type="project" value="TreeGrafter"/>
</dbReference>
<dbReference type="GO" id="GO:0003735">
    <property type="term" value="F:structural constituent of ribosome"/>
    <property type="evidence" value="ECO:0007669"/>
    <property type="project" value="InterPro"/>
</dbReference>
<dbReference type="GO" id="GO:0006412">
    <property type="term" value="P:translation"/>
    <property type="evidence" value="ECO:0007669"/>
    <property type="project" value="UniProtKB-UniRule"/>
</dbReference>
<dbReference type="CDD" id="cd00337">
    <property type="entry name" value="Ribosomal_uL14"/>
    <property type="match status" value="1"/>
</dbReference>
<dbReference type="FunFam" id="2.40.150.20:FF:000001">
    <property type="entry name" value="50S ribosomal protein L14"/>
    <property type="match status" value="1"/>
</dbReference>
<dbReference type="Gene3D" id="2.40.150.20">
    <property type="entry name" value="Ribosomal protein L14"/>
    <property type="match status" value="1"/>
</dbReference>
<dbReference type="HAMAP" id="MF_01367">
    <property type="entry name" value="Ribosomal_uL14"/>
    <property type="match status" value="1"/>
</dbReference>
<dbReference type="InterPro" id="IPR000218">
    <property type="entry name" value="Ribosomal_uL14"/>
</dbReference>
<dbReference type="InterPro" id="IPR005745">
    <property type="entry name" value="Ribosomal_uL14_bac-type"/>
</dbReference>
<dbReference type="InterPro" id="IPR019972">
    <property type="entry name" value="Ribosomal_uL14_CS"/>
</dbReference>
<dbReference type="InterPro" id="IPR036853">
    <property type="entry name" value="Ribosomal_uL14_sf"/>
</dbReference>
<dbReference type="NCBIfam" id="TIGR01067">
    <property type="entry name" value="rplN_bact"/>
    <property type="match status" value="1"/>
</dbReference>
<dbReference type="PANTHER" id="PTHR11761">
    <property type="entry name" value="50S/60S RIBOSOMAL PROTEIN L14/L23"/>
    <property type="match status" value="1"/>
</dbReference>
<dbReference type="PANTHER" id="PTHR11761:SF3">
    <property type="entry name" value="LARGE RIBOSOMAL SUBUNIT PROTEIN UL14M"/>
    <property type="match status" value="1"/>
</dbReference>
<dbReference type="Pfam" id="PF00238">
    <property type="entry name" value="Ribosomal_L14"/>
    <property type="match status" value="1"/>
</dbReference>
<dbReference type="SMART" id="SM01374">
    <property type="entry name" value="Ribosomal_L14"/>
    <property type="match status" value="1"/>
</dbReference>
<dbReference type="SUPFAM" id="SSF50193">
    <property type="entry name" value="Ribosomal protein L14"/>
    <property type="match status" value="1"/>
</dbReference>
<dbReference type="PROSITE" id="PS00049">
    <property type="entry name" value="RIBOSOMAL_L14"/>
    <property type="match status" value="1"/>
</dbReference>
<reference key="1">
    <citation type="submission" date="2008-01" db="EMBL/GenBank/DDBJ databases">
        <title>Complete sequence of Shewanella halifaxensis HAW-EB4.</title>
        <authorList>
            <consortium name="US DOE Joint Genome Institute"/>
            <person name="Copeland A."/>
            <person name="Lucas S."/>
            <person name="Lapidus A."/>
            <person name="Glavina del Rio T."/>
            <person name="Dalin E."/>
            <person name="Tice H."/>
            <person name="Bruce D."/>
            <person name="Goodwin L."/>
            <person name="Pitluck S."/>
            <person name="Sims D."/>
            <person name="Brettin T."/>
            <person name="Detter J.C."/>
            <person name="Han C."/>
            <person name="Kuske C.R."/>
            <person name="Schmutz J."/>
            <person name="Larimer F."/>
            <person name="Land M."/>
            <person name="Hauser L."/>
            <person name="Kyrpides N."/>
            <person name="Kim E."/>
            <person name="Zhao J.-S."/>
            <person name="Richardson P."/>
        </authorList>
    </citation>
    <scope>NUCLEOTIDE SEQUENCE [LARGE SCALE GENOMIC DNA]</scope>
    <source>
        <strain>HAW-EB4</strain>
    </source>
</reference>
<name>RL14_SHEHH</name>
<sequence length="122" mass="13357">MIQMQSTLEVACNSGARRVQCIKVLGGSHRRYAGIGDVIKVSVKEAIPRGKAKKGDVYNAVVVRTKKGVRRPDGSVIRFDRNAAVLLNANLAPIGTRIFGPVTRELRTERFMKIVSLAPEVL</sequence>
<protein>
    <recommendedName>
        <fullName evidence="1">Large ribosomal subunit protein uL14</fullName>
    </recommendedName>
    <alternativeName>
        <fullName evidence="2">50S ribosomal protein L14</fullName>
    </alternativeName>
</protein>
<feature type="chain" id="PRO_1000087147" description="Large ribosomal subunit protein uL14">
    <location>
        <begin position="1"/>
        <end position="122"/>
    </location>
</feature>
<evidence type="ECO:0000255" key="1">
    <source>
        <dbReference type="HAMAP-Rule" id="MF_01367"/>
    </source>
</evidence>
<evidence type="ECO:0000305" key="2"/>
<accession>B0TM02</accession>
<comment type="function">
    <text evidence="1">Binds to 23S rRNA. Forms part of two intersubunit bridges in the 70S ribosome.</text>
</comment>
<comment type="subunit">
    <text evidence="1">Part of the 50S ribosomal subunit. Forms a cluster with proteins L3 and L19. In the 70S ribosome, L14 and L19 interact and together make contacts with the 16S rRNA in bridges B5 and B8.</text>
</comment>
<comment type="similarity">
    <text evidence="1">Belongs to the universal ribosomal protein uL14 family.</text>
</comment>